<name>HLDD_YERP3</name>
<organism>
    <name type="scientific">Yersinia pseudotuberculosis serotype O:1b (strain IP 31758)</name>
    <dbReference type="NCBI Taxonomy" id="349747"/>
    <lineage>
        <taxon>Bacteria</taxon>
        <taxon>Pseudomonadati</taxon>
        <taxon>Pseudomonadota</taxon>
        <taxon>Gammaproteobacteria</taxon>
        <taxon>Enterobacterales</taxon>
        <taxon>Yersiniaceae</taxon>
        <taxon>Yersinia</taxon>
    </lineage>
</organism>
<accession>A7FCU3</accession>
<dbReference type="EC" id="5.1.3.20" evidence="1"/>
<dbReference type="EMBL" id="CP000720">
    <property type="protein sequence ID" value="ABS49685.1"/>
    <property type="molecule type" value="Genomic_DNA"/>
</dbReference>
<dbReference type="SMR" id="A7FCU3"/>
<dbReference type="KEGG" id="ypi:YpsIP31758_0070"/>
<dbReference type="HOGENOM" id="CLU_007383_1_3_6"/>
<dbReference type="UniPathway" id="UPA00356">
    <property type="reaction ID" value="UER00440"/>
</dbReference>
<dbReference type="Proteomes" id="UP000002412">
    <property type="component" value="Chromosome"/>
</dbReference>
<dbReference type="GO" id="GO:0008712">
    <property type="term" value="F:ADP-glyceromanno-heptose 6-epimerase activity"/>
    <property type="evidence" value="ECO:0007669"/>
    <property type="project" value="UniProtKB-UniRule"/>
</dbReference>
<dbReference type="GO" id="GO:0050661">
    <property type="term" value="F:NADP binding"/>
    <property type="evidence" value="ECO:0007669"/>
    <property type="project" value="InterPro"/>
</dbReference>
<dbReference type="GO" id="GO:0097171">
    <property type="term" value="P:ADP-L-glycero-beta-D-manno-heptose biosynthetic process"/>
    <property type="evidence" value="ECO:0007669"/>
    <property type="project" value="UniProtKB-UniPathway"/>
</dbReference>
<dbReference type="GO" id="GO:0005975">
    <property type="term" value="P:carbohydrate metabolic process"/>
    <property type="evidence" value="ECO:0007669"/>
    <property type="project" value="UniProtKB-UniRule"/>
</dbReference>
<dbReference type="CDD" id="cd05248">
    <property type="entry name" value="ADP_GME_SDR_e"/>
    <property type="match status" value="1"/>
</dbReference>
<dbReference type="Gene3D" id="3.40.50.720">
    <property type="entry name" value="NAD(P)-binding Rossmann-like Domain"/>
    <property type="match status" value="1"/>
</dbReference>
<dbReference type="Gene3D" id="3.90.25.10">
    <property type="entry name" value="UDP-galactose 4-epimerase, domain 1"/>
    <property type="match status" value="1"/>
</dbReference>
<dbReference type="HAMAP" id="MF_01601">
    <property type="entry name" value="Heptose_epimerase"/>
    <property type="match status" value="1"/>
</dbReference>
<dbReference type="InterPro" id="IPR001509">
    <property type="entry name" value="Epimerase_deHydtase"/>
</dbReference>
<dbReference type="InterPro" id="IPR011912">
    <property type="entry name" value="Heptose_epim"/>
</dbReference>
<dbReference type="InterPro" id="IPR036291">
    <property type="entry name" value="NAD(P)-bd_dom_sf"/>
</dbReference>
<dbReference type="NCBIfam" id="TIGR02197">
    <property type="entry name" value="heptose_epim"/>
    <property type="match status" value="1"/>
</dbReference>
<dbReference type="NCBIfam" id="NF008360">
    <property type="entry name" value="PRK11150.1"/>
    <property type="match status" value="1"/>
</dbReference>
<dbReference type="PANTHER" id="PTHR43103:SF3">
    <property type="entry name" value="ADP-L-GLYCERO-D-MANNO-HEPTOSE-6-EPIMERASE"/>
    <property type="match status" value="1"/>
</dbReference>
<dbReference type="PANTHER" id="PTHR43103">
    <property type="entry name" value="NUCLEOSIDE-DIPHOSPHATE-SUGAR EPIMERASE"/>
    <property type="match status" value="1"/>
</dbReference>
<dbReference type="Pfam" id="PF01370">
    <property type="entry name" value="Epimerase"/>
    <property type="match status" value="1"/>
</dbReference>
<dbReference type="SUPFAM" id="SSF51735">
    <property type="entry name" value="NAD(P)-binding Rossmann-fold domains"/>
    <property type="match status" value="1"/>
</dbReference>
<evidence type="ECO:0000255" key="1">
    <source>
        <dbReference type="HAMAP-Rule" id="MF_01601"/>
    </source>
</evidence>
<keyword id="KW-0119">Carbohydrate metabolism</keyword>
<keyword id="KW-0413">Isomerase</keyword>
<keyword id="KW-0521">NADP</keyword>
<feature type="chain" id="PRO_1000069372" description="ADP-L-glycero-D-manno-heptose-6-epimerase">
    <location>
        <begin position="1"/>
        <end position="310"/>
    </location>
</feature>
<feature type="active site" description="Proton acceptor" evidence="1">
    <location>
        <position position="140"/>
    </location>
</feature>
<feature type="active site" description="Proton acceptor" evidence="1">
    <location>
        <position position="178"/>
    </location>
</feature>
<feature type="binding site" evidence="1">
    <location>
        <begin position="10"/>
        <end position="11"/>
    </location>
    <ligand>
        <name>NADP(+)</name>
        <dbReference type="ChEBI" id="CHEBI:58349"/>
    </ligand>
</feature>
<feature type="binding site" evidence="1">
    <location>
        <begin position="31"/>
        <end position="32"/>
    </location>
    <ligand>
        <name>NADP(+)</name>
        <dbReference type="ChEBI" id="CHEBI:58349"/>
    </ligand>
</feature>
<feature type="binding site" evidence="1">
    <location>
        <position position="38"/>
    </location>
    <ligand>
        <name>NADP(+)</name>
        <dbReference type="ChEBI" id="CHEBI:58349"/>
    </ligand>
</feature>
<feature type="binding site" evidence="1">
    <location>
        <position position="53"/>
    </location>
    <ligand>
        <name>NADP(+)</name>
        <dbReference type="ChEBI" id="CHEBI:58349"/>
    </ligand>
</feature>
<feature type="binding site" evidence="1">
    <location>
        <begin position="75"/>
        <end position="79"/>
    </location>
    <ligand>
        <name>NADP(+)</name>
        <dbReference type="ChEBI" id="CHEBI:58349"/>
    </ligand>
</feature>
<feature type="binding site" evidence="1">
    <location>
        <position position="92"/>
    </location>
    <ligand>
        <name>NADP(+)</name>
        <dbReference type="ChEBI" id="CHEBI:58349"/>
    </ligand>
</feature>
<feature type="binding site" evidence="1">
    <location>
        <position position="144"/>
    </location>
    <ligand>
        <name>NADP(+)</name>
        <dbReference type="ChEBI" id="CHEBI:58349"/>
    </ligand>
</feature>
<feature type="binding site" evidence="1">
    <location>
        <position position="169"/>
    </location>
    <ligand>
        <name>substrate</name>
    </ligand>
</feature>
<feature type="binding site" evidence="1">
    <location>
        <position position="170"/>
    </location>
    <ligand>
        <name>NADP(+)</name>
        <dbReference type="ChEBI" id="CHEBI:58349"/>
    </ligand>
</feature>
<feature type="binding site" evidence="1">
    <location>
        <position position="178"/>
    </location>
    <ligand>
        <name>NADP(+)</name>
        <dbReference type="ChEBI" id="CHEBI:58349"/>
    </ligand>
</feature>
<feature type="binding site" evidence="1">
    <location>
        <position position="180"/>
    </location>
    <ligand>
        <name>substrate</name>
    </ligand>
</feature>
<feature type="binding site" evidence="1">
    <location>
        <position position="187"/>
    </location>
    <ligand>
        <name>substrate</name>
    </ligand>
</feature>
<feature type="binding site" evidence="1">
    <location>
        <begin position="201"/>
        <end position="204"/>
    </location>
    <ligand>
        <name>substrate</name>
    </ligand>
</feature>
<feature type="binding site" evidence="1">
    <location>
        <position position="209"/>
    </location>
    <ligand>
        <name>substrate</name>
    </ligand>
</feature>
<feature type="binding site" evidence="1">
    <location>
        <position position="272"/>
    </location>
    <ligand>
        <name>substrate</name>
    </ligand>
</feature>
<proteinExistence type="inferred from homology"/>
<sequence length="310" mass="34780">MIIVTGGAGFIGSNIVKALNNIGYKDILVVDNLKDGTKFVNLVDLDIADYMDKEDFVASIVAGDDMGDIDAIFHEGACSSTTEWDGKYMMDNNYQYSKDILHFCLDRSIPFLYASSAATYGGRTDNFIEDRQYEQPLNVYGYSKFLFDQYVREILPQADSQICGFRYFNVYGPREGHKGSMASVAFHLNNQINAGERPKLFAGSENFKRDFIYVGDVADVNLWFWQNGVSGIFNCGTGRAESFQAVADAVVDYHQSGPVEYIEFPEKLKGRYQAYTQADLTKLRAAGYGKPFKTVAEGVKEYLAWLNRSV</sequence>
<gene>
    <name evidence="1" type="primary">hldD</name>
    <name type="ordered locus">YpsIP31758_0070</name>
</gene>
<comment type="function">
    <text evidence="1">Catalyzes the interconversion between ADP-D-glycero-beta-D-manno-heptose and ADP-L-glycero-beta-D-manno-heptose via an epimerization at carbon 6 of the heptose.</text>
</comment>
<comment type="catalytic activity">
    <reaction evidence="1">
        <text>ADP-D-glycero-beta-D-manno-heptose = ADP-L-glycero-beta-D-manno-heptose</text>
        <dbReference type="Rhea" id="RHEA:17577"/>
        <dbReference type="ChEBI" id="CHEBI:59967"/>
        <dbReference type="ChEBI" id="CHEBI:61506"/>
        <dbReference type="EC" id="5.1.3.20"/>
    </reaction>
</comment>
<comment type="cofactor">
    <cofactor evidence="1">
        <name>NADP(+)</name>
        <dbReference type="ChEBI" id="CHEBI:58349"/>
    </cofactor>
    <text evidence="1">Binds 1 NADP(+) per subunit.</text>
</comment>
<comment type="pathway">
    <text evidence="1">Nucleotide-sugar biosynthesis; ADP-L-glycero-beta-D-manno-heptose biosynthesis; ADP-L-glycero-beta-D-manno-heptose from D-glycero-beta-D-manno-heptose 7-phosphate: step 4/4.</text>
</comment>
<comment type="subunit">
    <text evidence="1">Homopentamer.</text>
</comment>
<comment type="domain">
    <text evidence="1">Contains a large N-terminal NADP-binding domain, and a smaller C-terminal substrate-binding domain.</text>
</comment>
<comment type="similarity">
    <text evidence="1">Belongs to the NAD(P)-dependent epimerase/dehydratase family. HldD subfamily.</text>
</comment>
<reference key="1">
    <citation type="journal article" date="2007" name="PLoS Genet.">
        <title>The complete genome sequence of Yersinia pseudotuberculosis IP31758, the causative agent of Far East scarlet-like fever.</title>
        <authorList>
            <person name="Eppinger M."/>
            <person name="Rosovitz M.J."/>
            <person name="Fricke W.F."/>
            <person name="Rasko D.A."/>
            <person name="Kokorina G."/>
            <person name="Fayolle C."/>
            <person name="Lindler L.E."/>
            <person name="Carniel E."/>
            <person name="Ravel J."/>
        </authorList>
    </citation>
    <scope>NUCLEOTIDE SEQUENCE [LARGE SCALE GENOMIC DNA]</scope>
    <source>
        <strain>IP 31758</strain>
    </source>
</reference>
<protein>
    <recommendedName>
        <fullName evidence="1">ADP-L-glycero-D-manno-heptose-6-epimerase</fullName>
        <ecNumber evidence="1">5.1.3.20</ecNumber>
    </recommendedName>
    <alternativeName>
        <fullName evidence="1">ADP-L-glycero-beta-D-manno-heptose-6-epimerase</fullName>
        <shortName evidence="1">ADP-glyceromanno-heptose 6-epimerase</shortName>
        <shortName evidence="1">ADP-hep 6-epimerase</shortName>
        <shortName evidence="1">AGME</shortName>
    </alternativeName>
</protein>